<comment type="function">
    <text evidence="1">Catalyzes the interconversion of 2-phosphoglycerate and 3-phosphoglycerate.</text>
</comment>
<comment type="catalytic activity">
    <reaction evidence="1">
        <text>(2R)-2-phosphoglycerate = (2R)-3-phosphoglycerate</text>
        <dbReference type="Rhea" id="RHEA:15901"/>
        <dbReference type="ChEBI" id="CHEBI:58272"/>
        <dbReference type="ChEBI" id="CHEBI:58289"/>
        <dbReference type="EC" id="5.4.2.11"/>
    </reaction>
</comment>
<comment type="pathway">
    <text evidence="1">Carbohydrate degradation; glycolysis; pyruvate from D-glyceraldehyde 3-phosphate: step 3/5.</text>
</comment>
<comment type="subunit">
    <text evidence="1">Homodimer.</text>
</comment>
<comment type="similarity">
    <text evidence="1">Belongs to the phosphoglycerate mutase family. BPG-dependent PGAM subfamily.</text>
</comment>
<proteinExistence type="inferred from homology"/>
<dbReference type="EC" id="5.4.2.11" evidence="1"/>
<dbReference type="EMBL" id="CP001091">
    <property type="protein sequence ID" value="ACE61541.1"/>
    <property type="molecule type" value="Genomic_DNA"/>
</dbReference>
<dbReference type="RefSeq" id="WP_005597307.1">
    <property type="nucleotide sequence ID" value="NC_010939.1"/>
</dbReference>
<dbReference type="SMR" id="B3H1G9"/>
<dbReference type="KEGG" id="apa:APP7_0889"/>
<dbReference type="HOGENOM" id="CLU_033323_1_5_6"/>
<dbReference type="UniPathway" id="UPA00109">
    <property type="reaction ID" value="UER00186"/>
</dbReference>
<dbReference type="Proteomes" id="UP000001226">
    <property type="component" value="Chromosome"/>
</dbReference>
<dbReference type="GO" id="GO:0004619">
    <property type="term" value="F:phosphoglycerate mutase activity"/>
    <property type="evidence" value="ECO:0007669"/>
    <property type="project" value="UniProtKB-EC"/>
</dbReference>
<dbReference type="GO" id="GO:0006094">
    <property type="term" value="P:gluconeogenesis"/>
    <property type="evidence" value="ECO:0007669"/>
    <property type="project" value="UniProtKB-UniRule"/>
</dbReference>
<dbReference type="GO" id="GO:0006096">
    <property type="term" value="P:glycolytic process"/>
    <property type="evidence" value="ECO:0007669"/>
    <property type="project" value="UniProtKB-UniRule"/>
</dbReference>
<dbReference type="CDD" id="cd07067">
    <property type="entry name" value="HP_PGM_like"/>
    <property type="match status" value="1"/>
</dbReference>
<dbReference type="FunFam" id="3.40.50.1240:FF:000003">
    <property type="entry name" value="2,3-bisphosphoglycerate-dependent phosphoglycerate mutase"/>
    <property type="match status" value="1"/>
</dbReference>
<dbReference type="Gene3D" id="3.40.50.1240">
    <property type="entry name" value="Phosphoglycerate mutase-like"/>
    <property type="match status" value="1"/>
</dbReference>
<dbReference type="HAMAP" id="MF_01039">
    <property type="entry name" value="PGAM_GpmA"/>
    <property type="match status" value="1"/>
</dbReference>
<dbReference type="InterPro" id="IPR013078">
    <property type="entry name" value="His_Pase_superF_clade-1"/>
</dbReference>
<dbReference type="InterPro" id="IPR029033">
    <property type="entry name" value="His_PPase_superfam"/>
</dbReference>
<dbReference type="InterPro" id="IPR005952">
    <property type="entry name" value="Phosphogly_mut1"/>
</dbReference>
<dbReference type="NCBIfam" id="TIGR01258">
    <property type="entry name" value="pgm_1"/>
    <property type="match status" value="1"/>
</dbReference>
<dbReference type="NCBIfam" id="NF010713">
    <property type="entry name" value="PRK14115.1"/>
    <property type="match status" value="1"/>
</dbReference>
<dbReference type="NCBIfam" id="NF010716">
    <property type="entry name" value="PRK14118.1"/>
    <property type="match status" value="1"/>
</dbReference>
<dbReference type="PANTHER" id="PTHR11931">
    <property type="entry name" value="PHOSPHOGLYCERATE MUTASE"/>
    <property type="match status" value="1"/>
</dbReference>
<dbReference type="Pfam" id="PF00300">
    <property type="entry name" value="His_Phos_1"/>
    <property type="match status" value="2"/>
</dbReference>
<dbReference type="PIRSF" id="PIRSF000709">
    <property type="entry name" value="6PFK_2-Ptase"/>
    <property type="match status" value="1"/>
</dbReference>
<dbReference type="SMART" id="SM00855">
    <property type="entry name" value="PGAM"/>
    <property type="match status" value="1"/>
</dbReference>
<dbReference type="SUPFAM" id="SSF53254">
    <property type="entry name" value="Phosphoglycerate mutase-like"/>
    <property type="match status" value="1"/>
</dbReference>
<evidence type="ECO:0000255" key="1">
    <source>
        <dbReference type="HAMAP-Rule" id="MF_01039"/>
    </source>
</evidence>
<protein>
    <recommendedName>
        <fullName evidence="1">2,3-bisphosphoglycerate-dependent phosphoglycerate mutase</fullName>
        <shortName evidence="1">BPG-dependent PGAM</shortName>
        <shortName evidence="1">PGAM</shortName>
        <shortName evidence="1">Phosphoglyceromutase</shortName>
        <shortName evidence="1">dPGM</shortName>
        <ecNumber evidence="1">5.4.2.11</ecNumber>
    </recommendedName>
</protein>
<gene>
    <name evidence="1" type="primary">gpmA</name>
    <name type="ordered locus">APP7_0889</name>
</gene>
<name>GPMA_ACTP7</name>
<feature type="chain" id="PRO_1000135912" description="2,3-bisphosphoglycerate-dependent phosphoglycerate mutase">
    <location>
        <begin position="1"/>
        <end position="227"/>
    </location>
</feature>
<feature type="active site" description="Tele-phosphohistidine intermediate" evidence="1">
    <location>
        <position position="8"/>
    </location>
</feature>
<feature type="active site" description="Proton donor/acceptor" evidence="1">
    <location>
        <position position="86"/>
    </location>
</feature>
<feature type="binding site" evidence="1">
    <location>
        <begin position="7"/>
        <end position="14"/>
    </location>
    <ligand>
        <name>substrate</name>
    </ligand>
</feature>
<feature type="binding site" evidence="1">
    <location>
        <begin position="20"/>
        <end position="21"/>
    </location>
    <ligand>
        <name>substrate</name>
    </ligand>
</feature>
<feature type="binding site" evidence="1">
    <location>
        <position position="59"/>
    </location>
    <ligand>
        <name>substrate</name>
    </ligand>
</feature>
<feature type="binding site" evidence="1">
    <location>
        <begin position="86"/>
        <end position="89"/>
    </location>
    <ligand>
        <name>substrate</name>
    </ligand>
</feature>
<feature type="binding site" evidence="1">
    <location>
        <position position="97"/>
    </location>
    <ligand>
        <name>substrate</name>
    </ligand>
</feature>
<feature type="binding site" evidence="1">
    <location>
        <begin position="113"/>
        <end position="114"/>
    </location>
    <ligand>
        <name>substrate</name>
    </ligand>
</feature>
<feature type="binding site" evidence="1">
    <location>
        <begin position="182"/>
        <end position="183"/>
    </location>
    <ligand>
        <name>substrate</name>
    </ligand>
</feature>
<feature type="site" description="Transition state stabilizer" evidence="1">
    <location>
        <position position="181"/>
    </location>
</feature>
<reference key="1">
    <citation type="submission" date="2008-06" db="EMBL/GenBank/DDBJ databases">
        <title>Genome and proteome analysis of A. pleuropneumoniae serotype 7.</title>
        <authorList>
            <person name="Linke B."/>
            <person name="Buettner F."/>
            <person name="Martinez-Arias R."/>
            <person name="Goesmann A."/>
            <person name="Baltes N."/>
            <person name="Tegetmeyer H."/>
            <person name="Singh M."/>
            <person name="Gerlach G.F."/>
        </authorList>
    </citation>
    <scope>NUCLEOTIDE SEQUENCE [LARGE SCALE GENOMIC DNA]</scope>
    <source>
        <strain>AP76</strain>
    </source>
</reference>
<organism>
    <name type="scientific">Actinobacillus pleuropneumoniae serotype 7 (strain AP76)</name>
    <dbReference type="NCBI Taxonomy" id="537457"/>
    <lineage>
        <taxon>Bacteria</taxon>
        <taxon>Pseudomonadati</taxon>
        <taxon>Pseudomonadota</taxon>
        <taxon>Gammaproteobacteria</taxon>
        <taxon>Pasteurellales</taxon>
        <taxon>Pasteurellaceae</taxon>
        <taxon>Actinobacillus</taxon>
    </lineage>
</organism>
<sequence>MELVFIRHGFSEWNAKNLFTGWRDVNLTERGIEEAKSAGQKLKAAGYEFDIAFTSVLTRAIKTCNIVLEESNQLWIPQVKNWRLNERHYGALQGLDKKATAEQYGDEQVHIWRRSYDISPPDLDAADPNSAHNDRRYAHLPKDVIPNAENLKITLERVLPFWEDQIAPALLSGKRVLVTAHGNSLRALAKHIIGISDAEIMDFEIPTGQPLVLKLDDKLNFVEKFYL</sequence>
<accession>B3H1G9</accession>
<keyword id="KW-0312">Gluconeogenesis</keyword>
<keyword id="KW-0324">Glycolysis</keyword>
<keyword id="KW-0413">Isomerase</keyword>